<protein>
    <recommendedName>
        <fullName evidence="1">Translation factor GUF1 homolog, chloroplastic</fullName>
        <ecNumber>3.6.5.-</ecNumber>
    </recommendedName>
    <alternativeName>
        <fullName evidence="1">Elongation factor 4 homolog</fullName>
        <shortName evidence="1">EF-4</shortName>
    </alternativeName>
    <alternativeName>
        <fullName evidence="1">GTPase GUF1 homolog</fullName>
    </alternativeName>
    <alternativeName>
        <fullName evidence="1">Ribosomal back-translocase</fullName>
    </alternativeName>
</protein>
<organism>
    <name type="scientific">Oryza sativa subsp. indica</name>
    <name type="common">Rice</name>
    <dbReference type="NCBI Taxonomy" id="39946"/>
    <lineage>
        <taxon>Eukaryota</taxon>
        <taxon>Viridiplantae</taxon>
        <taxon>Streptophyta</taxon>
        <taxon>Embryophyta</taxon>
        <taxon>Tracheophyta</taxon>
        <taxon>Spermatophyta</taxon>
        <taxon>Magnoliopsida</taxon>
        <taxon>Liliopsida</taxon>
        <taxon>Poales</taxon>
        <taxon>Poaceae</taxon>
        <taxon>BOP clade</taxon>
        <taxon>Oryzoideae</taxon>
        <taxon>Oryzeae</taxon>
        <taxon>Oryzinae</taxon>
        <taxon>Oryza</taxon>
        <taxon>Oryza sativa</taxon>
    </lineage>
</organism>
<keyword id="KW-0150">Chloroplast</keyword>
<keyword id="KW-0342">GTP-binding</keyword>
<keyword id="KW-0378">Hydrolase</keyword>
<keyword id="KW-0547">Nucleotide-binding</keyword>
<keyword id="KW-0934">Plastid</keyword>
<keyword id="KW-0648">Protein biosynthesis</keyword>
<keyword id="KW-1185">Reference proteome</keyword>
<feature type="chain" id="PRO_0000402915" description="Translation factor GUF1 homolog, chloroplastic">
    <location>
        <begin position="1"/>
        <end position="636"/>
    </location>
</feature>
<feature type="domain" description="tr-type G">
    <location>
        <begin position="31"/>
        <end position="212"/>
    </location>
</feature>
<feature type="binding site" evidence="1">
    <location>
        <begin position="40"/>
        <end position="47"/>
    </location>
    <ligand>
        <name>GTP</name>
        <dbReference type="ChEBI" id="CHEBI:37565"/>
    </ligand>
</feature>
<feature type="binding site" evidence="1">
    <location>
        <begin position="105"/>
        <end position="109"/>
    </location>
    <ligand>
        <name>GTP</name>
        <dbReference type="ChEBI" id="CHEBI:37565"/>
    </ligand>
</feature>
<feature type="binding site" evidence="1">
    <location>
        <begin position="159"/>
        <end position="162"/>
    </location>
    <ligand>
        <name>GTP</name>
        <dbReference type="ChEBI" id="CHEBI:37565"/>
    </ligand>
</feature>
<evidence type="ECO:0000255" key="1">
    <source>
        <dbReference type="HAMAP-Rule" id="MF_03138"/>
    </source>
</evidence>
<dbReference type="EC" id="3.6.5.-"/>
<dbReference type="EMBL" id="CM000127">
    <property type="protein sequence ID" value="EEC72528.1"/>
    <property type="molecule type" value="Genomic_DNA"/>
</dbReference>
<dbReference type="SMR" id="B8AI54"/>
<dbReference type="STRING" id="39946.B8AI54"/>
<dbReference type="EnsemblPlants" id="BGIOSGA007099-TA">
    <property type="protein sequence ID" value="BGIOSGA007099-PA"/>
    <property type="gene ID" value="BGIOSGA007099"/>
</dbReference>
<dbReference type="Gramene" id="BGIOSGA007099-TA">
    <property type="protein sequence ID" value="BGIOSGA007099-PA"/>
    <property type="gene ID" value="BGIOSGA007099"/>
</dbReference>
<dbReference type="HOGENOM" id="CLU_009995_3_3_1"/>
<dbReference type="OMA" id="EYSFVGY"/>
<dbReference type="Proteomes" id="UP000007015">
    <property type="component" value="Chromosome 2"/>
</dbReference>
<dbReference type="GO" id="GO:0009507">
    <property type="term" value="C:chloroplast"/>
    <property type="evidence" value="ECO:0007669"/>
    <property type="project" value="UniProtKB-SubCell"/>
</dbReference>
<dbReference type="GO" id="GO:0005525">
    <property type="term" value="F:GTP binding"/>
    <property type="evidence" value="ECO:0007669"/>
    <property type="project" value="UniProtKB-UniRule"/>
</dbReference>
<dbReference type="GO" id="GO:0003924">
    <property type="term" value="F:GTPase activity"/>
    <property type="evidence" value="ECO:0007669"/>
    <property type="project" value="UniProtKB-UniRule"/>
</dbReference>
<dbReference type="GO" id="GO:0043022">
    <property type="term" value="F:ribosome binding"/>
    <property type="evidence" value="ECO:0007669"/>
    <property type="project" value="TreeGrafter"/>
</dbReference>
<dbReference type="GO" id="GO:0045727">
    <property type="term" value="P:positive regulation of translation"/>
    <property type="evidence" value="ECO:0007669"/>
    <property type="project" value="UniProtKB-UniRule"/>
</dbReference>
<dbReference type="GO" id="GO:0006412">
    <property type="term" value="P:translation"/>
    <property type="evidence" value="ECO:0007669"/>
    <property type="project" value="UniProtKB-KW"/>
</dbReference>
<dbReference type="CDD" id="cd03699">
    <property type="entry name" value="EF4_II"/>
    <property type="match status" value="1"/>
</dbReference>
<dbReference type="CDD" id="cd16260">
    <property type="entry name" value="EF4_III"/>
    <property type="match status" value="1"/>
</dbReference>
<dbReference type="CDD" id="cd01890">
    <property type="entry name" value="LepA"/>
    <property type="match status" value="1"/>
</dbReference>
<dbReference type="CDD" id="cd03709">
    <property type="entry name" value="lepA_C"/>
    <property type="match status" value="1"/>
</dbReference>
<dbReference type="FunFam" id="3.40.50.300:FF:000078">
    <property type="entry name" value="Elongation factor 4"/>
    <property type="match status" value="1"/>
</dbReference>
<dbReference type="FunFam" id="2.40.30.10:FF:000015">
    <property type="entry name" value="Translation factor GUF1, mitochondrial"/>
    <property type="match status" value="1"/>
</dbReference>
<dbReference type="FunFam" id="3.30.70.240:FF:000007">
    <property type="entry name" value="Translation factor GUF1, mitochondrial"/>
    <property type="match status" value="1"/>
</dbReference>
<dbReference type="FunFam" id="3.30.70.2570:FF:000001">
    <property type="entry name" value="Translation factor GUF1, mitochondrial"/>
    <property type="match status" value="1"/>
</dbReference>
<dbReference type="FunFam" id="3.30.70.870:FF:000004">
    <property type="entry name" value="Translation factor GUF1, mitochondrial"/>
    <property type="match status" value="1"/>
</dbReference>
<dbReference type="Gene3D" id="3.30.70.240">
    <property type="match status" value="1"/>
</dbReference>
<dbReference type="Gene3D" id="3.30.70.2570">
    <property type="entry name" value="Elongation factor 4, C-terminal domain"/>
    <property type="match status" value="1"/>
</dbReference>
<dbReference type="Gene3D" id="3.30.70.870">
    <property type="entry name" value="Elongation Factor G (Translational Gtpase), domain 3"/>
    <property type="match status" value="1"/>
</dbReference>
<dbReference type="Gene3D" id="3.40.50.300">
    <property type="entry name" value="P-loop containing nucleotide triphosphate hydrolases"/>
    <property type="match status" value="1"/>
</dbReference>
<dbReference type="Gene3D" id="2.40.30.10">
    <property type="entry name" value="Translation factors"/>
    <property type="match status" value="1"/>
</dbReference>
<dbReference type="HAMAP" id="MF_03138">
    <property type="entry name" value="GUFP"/>
    <property type="match status" value="1"/>
</dbReference>
<dbReference type="HAMAP" id="MF_00071">
    <property type="entry name" value="LepA"/>
    <property type="match status" value="1"/>
</dbReference>
<dbReference type="InterPro" id="IPR006297">
    <property type="entry name" value="EF-4"/>
</dbReference>
<dbReference type="InterPro" id="IPR035647">
    <property type="entry name" value="EFG_III/V"/>
</dbReference>
<dbReference type="InterPro" id="IPR000640">
    <property type="entry name" value="EFG_V-like"/>
</dbReference>
<dbReference type="InterPro" id="IPR004161">
    <property type="entry name" value="EFTu-like_2"/>
</dbReference>
<dbReference type="InterPro" id="IPR031157">
    <property type="entry name" value="G_TR_CS"/>
</dbReference>
<dbReference type="InterPro" id="IPR027518">
    <property type="entry name" value="GUFP"/>
</dbReference>
<dbReference type="InterPro" id="IPR038363">
    <property type="entry name" value="LepA_C_sf"/>
</dbReference>
<dbReference type="InterPro" id="IPR013842">
    <property type="entry name" value="LepA_CTD"/>
</dbReference>
<dbReference type="InterPro" id="IPR035654">
    <property type="entry name" value="LepA_IV"/>
</dbReference>
<dbReference type="InterPro" id="IPR027417">
    <property type="entry name" value="P-loop_NTPase"/>
</dbReference>
<dbReference type="InterPro" id="IPR005225">
    <property type="entry name" value="Small_GTP-bd"/>
</dbReference>
<dbReference type="InterPro" id="IPR000795">
    <property type="entry name" value="T_Tr_GTP-bd_dom"/>
</dbReference>
<dbReference type="InterPro" id="IPR009000">
    <property type="entry name" value="Transl_B-barrel_sf"/>
</dbReference>
<dbReference type="NCBIfam" id="TIGR01393">
    <property type="entry name" value="lepA"/>
    <property type="match status" value="1"/>
</dbReference>
<dbReference type="NCBIfam" id="TIGR00231">
    <property type="entry name" value="small_GTP"/>
    <property type="match status" value="1"/>
</dbReference>
<dbReference type="PANTHER" id="PTHR43512:SF4">
    <property type="entry name" value="TRANSLATION FACTOR GUF1 HOMOLOG, CHLOROPLASTIC"/>
    <property type="match status" value="1"/>
</dbReference>
<dbReference type="PANTHER" id="PTHR43512">
    <property type="entry name" value="TRANSLATION FACTOR GUF1-RELATED"/>
    <property type="match status" value="1"/>
</dbReference>
<dbReference type="Pfam" id="PF00679">
    <property type="entry name" value="EFG_C"/>
    <property type="match status" value="1"/>
</dbReference>
<dbReference type="Pfam" id="PF00009">
    <property type="entry name" value="GTP_EFTU"/>
    <property type="match status" value="1"/>
</dbReference>
<dbReference type="Pfam" id="PF03144">
    <property type="entry name" value="GTP_EFTU_D2"/>
    <property type="match status" value="1"/>
</dbReference>
<dbReference type="Pfam" id="PF06421">
    <property type="entry name" value="LepA_C"/>
    <property type="match status" value="1"/>
</dbReference>
<dbReference type="PRINTS" id="PR00315">
    <property type="entry name" value="ELONGATNFCT"/>
</dbReference>
<dbReference type="SMART" id="SM00838">
    <property type="entry name" value="EFG_C"/>
    <property type="match status" value="1"/>
</dbReference>
<dbReference type="SUPFAM" id="SSF54980">
    <property type="entry name" value="EF-G C-terminal domain-like"/>
    <property type="match status" value="2"/>
</dbReference>
<dbReference type="SUPFAM" id="SSF52540">
    <property type="entry name" value="P-loop containing nucleoside triphosphate hydrolases"/>
    <property type="match status" value="1"/>
</dbReference>
<dbReference type="SUPFAM" id="SSF50447">
    <property type="entry name" value="Translation proteins"/>
    <property type="match status" value="1"/>
</dbReference>
<dbReference type="PROSITE" id="PS00301">
    <property type="entry name" value="G_TR_1"/>
    <property type="match status" value="1"/>
</dbReference>
<dbReference type="PROSITE" id="PS51722">
    <property type="entry name" value="G_TR_2"/>
    <property type="match status" value="1"/>
</dbReference>
<sequence length="636" mass="70785">MTCAALLFRDTRSVPEKINLKVDGTLPSTMNLARNFSIIAHIDHGKSTLADKLLELTGTVQKREMKQQFLDNMDLERERGITIKLQAARMRYIMNDEPYCLNLIDTPGHVDFSYEVSRSLAACEGALLVVDASQGVEAQTLANVYLALENDLEIIPVLNKIDLPGAEPDRVAQEIEEIIGMDCSNAIRCSAKEGIGITEILDAIVTKIPPPQNTAISPLRALIFDSYYDPYRGVIVYFRVVDGSIKKGDKICFMASGKEYVADEIGVLSPNQMQVSELYAGEVGYLSASIRSVADARVGDTITHSSKRAECALPGYSQATPMVFCGLFPIDADQFEELREALEKLQLNDAALKAVTRFSMQFEPESSSAMGFGFRCGFLGLLHMEIVQERLEREYNLNLIITAPSVVYHVNLADGETVECSNPSLLPEPGKRRSIEEPYVKIDMLTPKEYIGPIMELGQERRGEFKEMNFITENRASVVYELPLAEMVGDFFDQLKSRSKGYASMEYSLIGYRESNLVKLDIQINGDPVEALSTIVHRDKAYSVGRALTQKLKELIPRQMFRVPIQACIGAKVIASEALSAIRKDVLSKCYGGDISRKKKLLKKQAEGKKRMKAIGRVDVPQEAFMAVLKLEKEVL</sequence>
<name>GUFP_ORYSI</name>
<proteinExistence type="inferred from homology"/>
<gene>
    <name type="ORF">OsI_05919</name>
</gene>
<reference key="1">
    <citation type="journal article" date="2005" name="PLoS Biol.">
        <title>The genomes of Oryza sativa: a history of duplications.</title>
        <authorList>
            <person name="Yu J."/>
            <person name="Wang J."/>
            <person name="Lin W."/>
            <person name="Li S."/>
            <person name="Li H."/>
            <person name="Zhou J."/>
            <person name="Ni P."/>
            <person name="Dong W."/>
            <person name="Hu S."/>
            <person name="Zeng C."/>
            <person name="Zhang J."/>
            <person name="Zhang Y."/>
            <person name="Li R."/>
            <person name="Xu Z."/>
            <person name="Li S."/>
            <person name="Li X."/>
            <person name="Zheng H."/>
            <person name="Cong L."/>
            <person name="Lin L."/>
            <person name="Yin J."/>
            <person name="Geng J."/>
            <person name="Li G."/>
            <person name="Shi J."/>
            <person name="Liu J."/>
            <person name="Lv H."/>
            <person name="Li J."/>
            <person name="Wang J."/>
            <person name="Deng Y."/>
            <person name="Ran L."/>
            <person name="Shi X."/>
            <person name="Wang X."/>
            <person name="Wu Q."/>
            <person name="Li C."/>
            <person name="Ren X."/>
            <person name="Wang J."/>
            <person name="Wang X."/>
            <person name="Li D."/>
            <person name="Liu D."/>
            <person name="Zhang X."/>
            <person name="Ji Z."/>
            <person name="Zhao W."/>
            <person name="Sun Y."/>
            <person name="Zhang Z."/>
            <person name="Bao J."/>
            <person name="Han Y."/>
            <person name="Dong L."/>
            <person name="Ji J."/>
            <person name="Chen P."/>
            <person name="Wu S."/>
            <person name="Liu J."/>
            <person name="Xiao Y."/>
            <person name="Bu D."/>
            <person name="Tan J."/>
            <person name="Yang L."/>
            <person name="Ye C."/>
            <person name="Zhang J."/>
            <person name="Xu J."/>
            <person name="Zhou Y."/>
            <person name="Yu Y."/>
            <person name="Zhang B."/>
            <person name="Zhuang S."/>
            <person name="Wei H."/>
            <person name="Liu B."/>
            <person name="Lei M."/>
            <person name="Yu H."/>
            <person name="Li Y."/>
            <person name="Xu H."/>
            <person name="Wei S."/>
            <person name="He X."/>
            <person name="Fang L."/>
            <person name="Zhang Z."/>
            <person name="Zhang Y."/>
            <person name="Huang X."/>
            <person name="Su Z."/>
            <person name="Tong W."/>
            <person name="Li J."/>
            <person name="Tong Z."/>
            <person name="Li S."/>
            <person name="Ye J."/>
            <person name="Wang L."/>
            <person name="Fang L."/>
            <person name="Lei T."/>
            <person name="Chen C.-S."/>
            <person name="Chen H.-C."/>
            <person name="Xu Z."/>
            <person name="Li H."/>
            <person name="Huang H."/>
            <person name="Zhang F."/>
            <person name="Xu H."/>
            <person name="Li N."/>
            <person name="Zhao C."/>
            <person name="Li S."/>
            <person name="Dong L."/>
            <person name="Huang Y."/>
            <person name="Li L."/>
            <person name="Xi Y."/>
            <person name="Qi Q."/>
            <person name="Li W."/>
            <person name="Zhang B."/>
            <person name="Hu W."/>
            <person name="Zhang Y."/>
            <person name="Tian X."/>
            <person name="Jiao Y."/>
            <person name="Liang X."/>
            <person name="Jin J."/>
            <person name="Gao L."/>
            <person name="Zheng W."/>
            <person name="Hao B."/>
            <person name="Liu S.-M."/>
            <person name="Wang W."/>
            <person name="Yuan L."/>
            <person name="Cao M."/>
            <person name="McDermott J."/>
            <person name="Samudrala R."/>
            <person name="Wang J."/>
            <person name="Wong G.K.-S."/>
            <person name="Yang H."/>
        </authorList>
    </citation>
    <scope>NUCLEOTIDE SEQUENCE [LARGE SCALE GENOMIC DNA]</scope>
    <source>
        <strain>cv. 93-11</strain>
    </source>
</reference>
<accession>B8AI54</accession>
<comment type="function">
    <text evidence="1">Promotes chloroplast protein synthesis. May act as a fidelity factor of the translation reaction, by catalyzing a one-codon backward translocation of tRNAs on improperly translocated ribosomes.</text>
</comment>
<comment type="catalytic activity">
    <reaction evidence="1">
        <text>GTP + H2O = GDP + phosphate + H(+)</text>
        <dbReference type="Rhea" id="RHEA:19669"/>
        <dbReference type="ChEBI" id="CHEBI:15377"/>
        <dbReference type="ChEBI" id="CHEBI:15378"/>
        <dbReference type="ChEBI" id="CHEBI:37565"/>
        <dbReference type="ChEBI" id="CHEBI:43474"/>
        <dbReference type="ChEBI" id="CHEBI:58189"/>
    </reaction>
</comment>
<comment type="subcellular location">
    <subcellularLocation>
        <location evidence="1">Plastid</location>
        <location evidence="1">Chloroplast</location>
    </subcellularLocation>
</comment>
<comment type="miscellaneous">
    <text evidence="1">This protein may be expected to contain an N-terminal transit peptide but none has been predicted.</text>
</comment>
<comment type="similarity">
    <text evidence="1">Belongs to the TRAFAC class translation factor GTPase superfamily. Classic translation factor GTPase family. LepA subfamily.</text>
</comment>